<comment type="function">
    <text evidence="1">Catalyzes the transfer of a methyl group from 5-methyltetrahydrofolate to homocysteine resulting in methionine formation.</text>
</comment>
<comment type="catalytic activity">
    <reaction evidence="1">
        <text>5-methyltetrahydropteroyltri-L-glutamate + L-homocysteine = tetrahydropteroyltri-L-glutamate + L-methionine</text>
        <dbReference type="Rhea" id="RHEA:21196"/>
        <dbReference type="ChEBI" id="CHEBI:57844"/>
        <dbReference type="ChEBI" id="CHEBI:58140"/>
        <dbReference type="ChEBI" id="CHEBI:58199"/>
        <dbReference type="ChEBI" id="CHEBI:58207"/>
        <dbReference type="EC" id="2.1.1.14"/>
    </reaction>
</comment>
<comment type="cofactor">
    <cofactor evidence="1">
        <name>Zn(2+)</name>
        <dbReference type="ChEBI" id="CHEBI:29105"/>
    </cofactor>
    <text evidence="1">Binds 1 zinc ion per subunit.</text>
</comment>
<comment type="pathway">
    <text evidence="1">Amino-acid biosynthesis; L-methionine biosynthesis via de novo pathway; L-methionine from L-homocysteine (MetE route): step 1/1.</text>
</comment>
<comment type="similarity">
    <text evidence="1">Belongs to the vitamin-B12 independent methionine synthase family.</text>
</comment>
<comment type="sequence caution" evidence="2">
    <conflict type="erroneous initiation">
        <sequence resource="EMBL-CDS" id="AAM84031"/>
    </conflict>
</comment>
<gene>
    <name evidence="1" type="primary">metE</name>
    <name type="ordered locus">YPO3788</name>
    <name type="ordered locus">y0442</name>
    <name type="ordered locus">YP_3261</name>
</gene>
<reference key="1">
    <citation type="journal article" date="2001" name="Nature">
        <title>Genome sequence of Yersinia pestis, the causative agent of plague.</title>
        <authorList>
            <person name="Parkhill J."/>
            <person name="Wren B.W."/>
            <person name="Thomson N.R."/>
            <person name="Titball R.W."/>
            <person name="Holden M.T.G."/>
            <person name="Prentice M.B."/>
            <person name="Sebaihia M."/>
            <person name="James K.D."/>
            <person name="Churcher C.M."/>
            <person name="Mungall K.L."/>
            <person name="Baker S."/>
            <person name="Basham D."/>
            <person name="Bentley S.D."/>
            <person name="Brooks K."/>
            <person name="Cerdeno-Tarraga A.-M."/>
            <person name="Chillingworth T."/>
            <person name="Cronin A."/>
            <person name="Davies R.M."/>
            <person name="Davis P."/>
            <person name="Dougan G."/>
            <person name="Feltwell T."/>
            <person name="Hamlin N."/>
            <person name="Holroyd S."/>
            <person name="Jagels K."/>
            <person name="Karlyshev A.V."/>
            <person name="Leather S."/>
            <person name="Moule S."/>
            <person name="Oyston P.C.F."/>
            <person name="Quail M.A."/>
            <person name="Rutherford K.M."/>
            <person name="Simmonds M."/>
            <person name="Skelton J."/>
            <person name="Stevens K."/>
            <person name="Whitehead S."/>
            <person name="Barrell B.G."/>
        </authorList>
    </citation>
    <scope>NUCLEOTIDE SEQUENCE [LARGE SCALE GENOMIC DNA]</scope>
    <source>
        <strain>CO-92 / Biovar Orientalis</strain>
    </source>
</reference>
<reference key="2">
    <citation type="journal article" date="2002" name="J. Bacteriol.">
        <title>Genome sequence of Yersinia pestis KIM.</title>
        <authorList>
            <person name="Deng W."/>
            <person name="Burland V."/>
            <person name="Plunkett G. III"/>
            <person name="Boutin A."/>
            <person name="Mayhew G.F."/>
            <person name="Liss P."/>
            <person name="Perna N.T."/>
            <person name="Rose D.J."/>
            <person name="Mau B."/>
            <person name="Zhou S."/>
            <person name="Schwartz D.C."/>
            <person name="Fetherston J.D."/>
            <person name="Lindler L.E."/>
            <person name="Brubaker R.R."/>
            <person name="Plano G.V."/>
            <person name="Straley S.C."/>
            <person name="McDonough K.A."/>
            <person name="Nilles M.L."/>
            <person name="Matson J.S."/>
            <person name="Blattner F.R."/>
            <person name="Perry R.D."/>
        </authorList>
    </citation>
    <scope>NUCLEOTIDE SEQUENCE [LARGE SCALE GENOMIC DNA]</scope>
    <source>
        <strain>KIM10+ / Biovar Mediaevalis</strain>
    </source>
</reference>
<reference key="3">
    <citation type="journal article" date="2004" name="DNA Res.">
        <title>Complete genome sequence of Yersinia pestis strain 91001, an isolate avirulent to humans.</title>
        <authorList>
            <person name="Song Y."/>
            <person name="Tong Z."/>
            <person name="Wang J."/>
            <person name="Wang L."/>
            <person name="Guo Z."/>
            <person name="Han Y."/>
            <person name="Zhang J."/>
            <person name="Pei D."/>
            <person name="Zhou D."/>
            <person name="Qin H."/>
            <person name="Pang X."/>
            <person name="Han Y."/>
            <person name="Zhai J."/>
            <person name="Li M."/>
            <person name="Cui B."/>
            <person name="Qi Z."/>
            <person name="Jin L."/>
            <person name="Dai R."/>
            <person name="Chen F."/>
            <person name="Li S."/>
            <person name="Ye C."/>
            <person name="Du Z."/>
            <person name="Lin W."/>
            <person name="Wang J."/>
            <person name="Yu J."/>
            <person name="Yang H."/>
            <person name="Wang J."/>
            <person name="Huang P."/>
            <person name="Yang R."/>
        </authorList>
    </citation>
    <scope>NUCLEOTIDE SEQUENCE [LARGE SCALE GENOMIC DNA]</scope>
    <source>
        <strain>91001 / Biovar Mediaevalis</strain>
    </source>
</reference>
<proteinExistence type="inferred from homology"/>
<sequence>MTILNHTLGFPRVGLKRELKKAQESYWAGNSTQEELLNVGRELRARHWQQQQQAGVDLVPVGDFAWYDHVLTTSLLLGNVPERHQNADGSIDIDTLFRIGRGRAPTGKPAAAAEMTKWFNTNYHYMVPEFQQGQQFKLGWTQLLDEVDEALALGHKIKPVLLGPITYLWLGKVKGEQFDRLSLLNDILPVYQQVLAELAKRGIEWVQIDEPALVLELPQEWLDAYQPAYQALQGQVKLLLTTYFDSIGHNIDTIRALPVQGLHVDVVTGHDDLAVLNKNLPKEWLLSLGVINGRNVWRADLSSWFERLQPLVNSRPLWLGSSCSLLHSPIDLNEETRLDAEVKSWFAFALQKCAELALLTQALNAPNDAKLAELAAYSAPIRARRSSSRVHNAQVEQRLAAITSQDIERQLPYEARAETQRKRFNLPAWPTTTIGSFPQTTEIRGLRLDFKQGRLDGKNYRTGISEHIKHAIAEQERLGLDVLVHGEAERNDMVEYFGEHLDGFVFTQNGWVQSYGSRCVKPPVIIGDISRPEAITVEWAKYAQSLTEKPVKGMLTGPVTILCWSFPREDVSRETIAKQIALALRDEVEDLEKAGIGIIQIDEPALREGLPLRRADWQAYLQWAVDAFKLNAAVAQNDTQIHTHMCYCEFNDIMDSIAALDADVITIETSRSDMELLESFEDFAYPNEIGPGVYDIHSPNVPSVEWIEALLRKAAQRIPAERLWVNPDCGLKTRGWPETRQALANMVLAAQRLREEQV</sequence>
<accession>Q8ZAL3</accession>
<accession>Q0WAM3</accession>
<accession>Q8D1I5</accession>
<evidence type="ECO:0000255" key="1">
    <source>
        <dbReference type="HAMAP-Rule" id="MF_00172"/>
    </source>
</evidence>
<evidence type="ECO:0000305" key="2"/>
<protein>
    <recommendedName>
        <fullName evidence="1">5-methyltetrahydropteroyltriglutamate--homocysteine methyltransferase</fullName>
        <ecNumber evidence="1">2.1.1.14</ecNumber>
    </recommendedName>
    <alternativeName>
        <fullName evidence="1">Cobalamin-independent methionine synthase</fullName>
    </alternativeName>
    <alternativeName>
        <fullName evidence="1">Methionine synthase, vitamin-B12 independent isozyme</fullName>
    </alternativeName>
</protein>
<organism>
    <name type="scientific">Yersinia pestis</name>
    <dbReference type="NCBI Taxonomy" id="632"/>
    <lineage>
        <taxon>Bacteria</taxon>
        <taxon>Pseudomonadati</taxon>
        <taxon>Pseudomonadota</taxon>
        <taxon>Gammaproteobacteria</taxon>
        <taxon>Enterobacterales</taxon>
        <taxon>Yersiniaceae</taxon>
        <taxon>Yersinia</taxon>
    </lineage>
</organism>
<feature type="chain" id="PRO_0000098682" description="5-methyltetrahydropteroyltriglutamate--homocysteine methyltransferase">
    <location>
        <begin position="1"/>
        <end position="758"/>
    </location>
</feature>
<feature type="active site" description="Proton donor" evidence="1">
    <location>
        <position position="697"/>
    </location>
</feature>
<feature type="binding site" evidence="1">
    <location>
        <begin position="17"/>
        <end position="20"/>
    </location>
    <ligand>
        <name>5-methyltetrahydropteroyltri-L-glutamate</name>
        <dbReference type="ChEBI" id="CHEBI:58207"/>
    </ligand>
</feature>
<feature type="binding site" evidence="1">
    <location>
        <position position="117"/>
    </location>
    <ligand>
        <name>5-methyltetrahydropteroyltri-L-glutamate</name>
        <dbReference type="ChEBI" id="CHEBI:58207"/>
    </ligand>
</feature>
<feature type="binding site" evidence="1">
    <location>
        <begin position="434"/>
        <end position="436"/>
    </location>
    <ligand>
        <name>L-homocysteine</name>
        <dbReference type="ChEBI" id="CHEBI:58199"/>
    </ligand>
</feature>
<feature type="binding site" evidence="1">
    <location>
        <begin position="434"/>
        <end position="436"/>
    </location>
    <ligand>
        <name>L-methionine</name>
        <dbReference type="ChEBI" id="CHEBI:57844"/>
    </ligand>
</feature>
<feature type="binding site" evidence="1">
    <location>
        <position position="487"/>
    </location>
    <ligand>
        <name>L-homocysteine</name>
        <dbReference type="ChEBI" id="CHEBI:58199"/>
    </ligand>
</feature>
<feature type="binding site" evidence="1">
    <location>
        <position position="487"/>
    </location>
    <ligand>
        <name>L-methionine</name>
        <dbReference type="ChEBI" id="CHEBI:57844"/>
    </ligand>
</feature>
<feature type="binding site" evidence="1">
    <location>
        <begin position="518"/>
        <end position="519"/>
    </location>
    <ligand>
        <name>5-methyltetrahydropteroyltri-L-glutamate</name>
        <dbReference type="ChEBI" id="CHEBI:58207"/>
    </ligand>
</feature>
<feature type="binding site" evidence="1">
    <location>
        <position position="564"/>
    </location>
    <ligand>
        <name>5-methyltetrahydropteroyltri-L-glutamate</name>
        <dbReference type="ChEBI" id="CHEBI:58207"/>
    </ligand>
</feature>
<feature type="binding site" evidence="1">
    <location>
        <position position="602"/>
    </location>
    <ligand>
        <name>L-homocysteine</name>
        <dbReference type="ChEBI" id="CHEBI:58199"/>
    </ligand>
</feature>
<feature type="binding site" evidence="1">
    <location>
        <position position="602"/>
    </location>
    <ligand>
        <name>L-methionine</name>
        <dbReference type="ChEBI" id="CHEBI:57844"/>
    </ligand>
</feature>
<feature type="binding site" evidence="1">
    <location>
        <position position="608"/>
    </location>
    <ligand>
        <name>5-methyltetrahydropteroyltri-L-glutamate</name>
        <dbReference type="ChEBI" id="CHEBI:58207"/>
    </ligand>
</feature>
<feature type="binding site" evidence="1">
    <location>
        <position position="644"/>
    </location>
    <ligand>
        <name>Zn(2+)</name>
        <dbReference type="ChEBI" id="CHEBI:29105"/>
        <note>catalytic</note>
    </ligand>
</feature>
<feature type="binding site" evidence="1">
    <location>
        <position position="646"/>
    </location>
    <ligand>
        <name>Zn(2+)</name>
        <dbReference type="ChEBI" id="CHEBI:29105"/>
        <note>catalytic</note>
    </ligand>
</feature>
<feature type="binding site" evidence="1">
    <location>
        <position position="668"/>
    </location>
    <ligand>
        <name>Zn(2+)</name>
        <dbReference type="ChEBI" id="CHEBI:29105"/>
        <note>catalytic</note>
    </ligand>
</feature>
<feature type="binding site" evidence="1">
    <location>
        <position position="729"/>
    </location>
    <ligand>
        <name>Zn(2+)</name>
        <dbReference type="ChEBI" id="CHEBI:29105"/>
        <note>catalytic</note>
    </ligand>
</feature>
<keyword id="KW-0028">Amino-acid biosynthesis</keyword>
<keyword id="KW-0479">Metal-binding</keyword>
<keyword id="KW-0486">Methionine biosynthesis</keyword>
<keyword id="KW-0489">Methyltransferase</keyword>
<keyword id="KW-1185">Reference proteome</keyword>
<keyword id="KW-0677">Repeat</keyword>
<keyword id="KW-0808">Transferase</keyword>
<keyword id="KW-0862">Zinc</keyword>
<name>METE_YERPE</name>
<dbReference type="EC" id="2.1.1.14" evidence="1"/>
<dbReference type="EMBL" id="AL590842">
    <property type="protein sequence ID" value="CAL22374.1"/>
    <property type="molecule type" value="Genomic_DNA"/>
</dbReference>
<dbReference type="EMBL" id="AE009952">
    <property type="protein sequence ID" value="AAM84031.1"/>
    <property type="status" value="ALT_INIT"/>
    <property type="molecule type" value="Genomic_DNA"/>
</dbReference>
<dbReference type="EMBL" id="AE017042">
    <property type="protein sequence ID" value="AAS63429.1"/>
    <property type="molecule type" value="Genomic_DNA"/>
</dbReference>
<dbReference type="PIR" id="AC0461">
    <property type="entry name" value="AC0461"/>
</dbReference>
<dbReference type="RefSeq" id="WP_002211526.1">
    <property type="nucleotide sequence ID" value="NZ_WUCM01000048.1"/>
</dbReference>
<dbReference type="RefSeq" id="YP_002348665.1">
    <property type="nucleotide sequence ID" value="NC_003143.1"/>
</dbReference>
<dbReference type="SMR" id="Q8ZAL3"/>
<dbReference type="IntAct" id="Q8ZAL3">
    <property type="interactions" value="4"/>
</dbReference>
<dbReference type="STRING" id="214092.YPO3788"/>
<dbReference type="PaxDb" id="214092-YPO3788"/>
<dbReference type="DNASU" id="1145389"/>
<dbReference type="EnsemblBacteria" id="AAS63429">
    <property type="protein sequence ID" value="AAS63429"/>
    <property type="gene ID" value="YP_3261"/>
</dbReference>
<dbReference type="GeneID" id="57974920"/>
<dbReference type="KEGG" id="ype:YPO3788"/>
<dbReference type="KEGG" id="ypj:CH55_3228"/>
<dbReference type="KEGG" id="ypk:y0442"/>
<dbReference type="KEGG" id="ypl:CH46_1278"/>
<dbReference type="KEGG" id="ypm:YP_3261"/>
<dbReference type="KEGG" id="ypv:BZ15_3928"/>
<dbReference type="KEGG" id="ypw:CH59_1723"/>
<dbReference type="PATRIC" id="fig|214092.21.peg.4310"/>
<dbReference type="eggNOG" id="COG0620">
    <property type="taxonomic scope" value="Bacteria"/>
</dbReference>
<dbReference type="HOGENOM" id="CLU_013175_0_0_6"/>
<dbReference type="OMA" id="KVMKGML"/>
<dbReference type="OrthoDB" id="244285at2"/>
<dbReference type="UniPathway" id="UPA00051">
    <property type="reaction ID" value="UER00082"/>
</dbReference>
<dbReference type="Proteomes" id="UP000000815">
    <property type="component" value="Chromosome"/>
</dbReference>
<dbReference type="Proteomes" id="UP000001019">
    <property type="component" value="Chromosome"/>
</dbReference>
<dbReference type="Proteomes" id="UP000002490">
    <property type="component" value="Chromosome"/>
</dbReference>
<dbReference type="GO" id="GO:0003871">
    <property type="term" value="F:5-methyltetrahydropteroyltriglutamate-homocysteine S-methyltransferase activity"/>
    <property type="evidence" value="ECO:0007669"/>
    <property type="project" value="UniProtKB-UniRule"/>
</dbReference>
<dbReference type="GO" id="GO:0008270">
    <property type="term" value="F:zinc ion binding"/>
    <property type="evidence" value="ECO:0007669"/>
    <property type="project" value="InterPro"/>
</dbReference>
<dbReference type="GO" id="GO:0009086">
    <property type="term" value="P:methionine biosynthetic process"/>
    <property type="evidence" value="ECO:0007669"/>
    <property type="project" value="UniProtKB-UniRule"/>
</dbReference>
<dbReference type="GO" id="GO:0032259">
    <property type="term" value="P:methylation"/>
    <property type="evidence" value="ECO:0007669"/>
    <property type="project" value="UniProtKB-KW"/>
</dbReference>
<dbReference type="CDD" id="cd03311">
    <property type="entry name" value="CIMS_C_terminal_like"/>
    <property type="match status" value="1"/>
</dbReference>
<dbReference type="CDD" id="cd03312">
    <property type="entry name" value="CIMS_N_terminal_like"/>
    <property type="match status" value="1"/>
</dbReference>
<dbReference type="FunFam" id="3.20.20.210:FF:000002">
    <property type="entry name" value="5-methyltetrahydropteroyltriglutamate--homocysteine methyltransferase"/>
    <property type="match status" value="1"/>
</dbReference>
<dbReference type="FunFam" id="3.20.20.210:FF:000003">
    <property type="entry name" value="5-methyltetrahydropteroyltriglutamate--homocysteine methyltransferase"/>
    <property type="match status" value="1"/>
</dbReference>
<dbReference type="Gene3D" id="3.20.20.210">
    <property type="match status" value="2"/>
</dbReference>
<dbReference type="HAMAP" id="MF_00172">
    <property type="entry name" value="Meth_synth"/>
    <property type="match status" value="1"/>
</dbReference>
<dbReference type="InterPro" id="IPR013215">
    <property type="entry name" value="Cbl-indep_Met_Synth_N"/>
</dbReference>
<dbReference type="InterPro" id="IPR006276">
    <property type="entry name" value="Cobalamin-indep_Met_synthase"/>
</dbReference>
<dbReference type="InterPro" id="IPR002629">
    <property type="entry name" value="Met_Synth_C/arc"/>
</dbReference>
<dbReference type="InterPro" id="IPR038071">
    <property type="entry name" value="UROD/MetE-like_sf"/>
</dbReference>
<dbReference type="NCBIfam" id="TIGR01371">
    <property type="entry name" value="met_syn_B12ind"/>
    <property type="match status" value="1"/>
</dbReference>
<dbReference type="NCBIfam" id="NF003556">
    <property type="entry name" value="PRK05222.1"/>
    <property type="match status" value="1"/>
</dbReference>
<dbReference type="PANTHER" id="PTHR30519">
    <property type="entry name" value="5-METHYLTETRAHYDROPTEROYLTRIGLUTAMATE--HOMOCYSTEINE METHYLTRANSFERASE"/>
    <property type="match status" value="1"/>
</dbReference>
<dbReference type="Pfam" id="PF08267">
    <property type="entry name" value="Meth_synt_1"/>
    <property type="match status" value="1"/>
</dbReference>
<dbReference type="Pfam" id="PF01717">
    <property type="entry name" value="Meth_synt_2"/>
    <property type="match status" value="1"/>
</dbReference>
<dbReference type="PIRSF" id="PIRSF000382">
    <property type="entry name" value="MeTrfase_B12_ind"/>
    <property type="match status" value="1"/>
</dbReference>
<dbReference type="SUPFAM" id="SSF51726">
    <property type="entry name" value="UROD/MetE-like"/>
    <property type="match status" value="2"/>
</dbReference>